<sequence>MTGPHAAGGSNHRTARLVAIIAGLLGTLMAIATPLLPVEQTTAELNWPQNGVWQSVDAPLIGYVATDLTVTVPCQAAAGLVGPENRNRSVLLSTVPKQAPKAIDRGLLIERINNDLTVIVRNTPVVSAPLEQVLSPDCRYLTFTAHADKVTGEFVGLTQGPDDDDPGEAVRGERSGYDFRPQIVGVFTDLSGPAPEGLQLSATIDTRYSTSPTLLKLLAMIVGVAMTVIALGALHVLDCADGRRHKRFLPSRWWSMTPLDGLVSAMLVWWHFVGANTADDGYILTMARVSEHAGYMANYYRWFGTPESPFGWYYDLLALWAHVSTASVWMRFPTLLMGLACWWVISREVIPRLGAAAKHSRAAAWTAAGLFLAFWLPLNNGLRPEPIIALGILLTWCSVERGVATSRLLPVAVAIIIGALTLFSGPTGIAAVGALLVAIGPLKTIVAAHVSRFGYWALLAPIAAAGTVTIFLIFRDQTLAAELQASSFKSAVGPSLAWFDEHIRYSRLFTTSPDGSVARRFAVLTLLLALAVSIAMTLRKGRIPGTALGPSRRIIGITIISFLAMMFTPTKWTHQFGVFAGLAGCLGALAAVAVTTTAMKSRRNRTVFGAAVLFVTALSFATVNGWWYVSNFGVPWSNSFPEFKFGFTTMLLGLSVLALLVAAWFHFSGRDVSPDRPQRRWQRLLVAPLAVATWALVIFEVVSLTLGMINQYPAWSVGRSNLNALTGKTCGLANDVLVEQNANAGMLTPIGEPAGQALGAVTSLGFGPNGIPSDVSADPVMEQPGTDNFADSDSGVVTGTEVGTEGGTTAAAGINGSRARLPYGLNPATTPVLGSWRSGTQQPAVLRSAWYRLPDRDQAGPLLVVSAAGRFDQGEVEVQWATDEQAAANEPGGSITFGDVGAAPAWRNLRAPLSSIPPEATQIRLVASDDDLAPQHWIALTPPRIPELRTLQEVVGSSDPVMLDWLVGLAFPCQRPFDHRYGVVEVPKWRILPDRFGAEANSPVMDYLGGGPLGITELLLRPSSVPTYLKDDWYRDWGSLQRLTPWYPDAQPARLDLGTATRSGWWSPAPLRLS</sequence>
<feature type="chain" id="PRO_0000220572" description="Probable arabinosyltransferase C">
    <location>
        <begin position="1"/>
        <end position="1074"/>
    </location>
</feature>
<feature type="transmembrane region" description="Helical" evidence="1">
    <location>
        <begin position="15"/>
        <end position="37"/>
    </location>
</feature>
<feature type="transmembrane region" description="Helical" evidence="1">
    <location>
        <begin position="214"/>
        <end position="236"/>
    </location>
</feature>
<feature type="transmembrane region" description="Helical" evidence="1">
    <location>
        <begin position="251"/>
        <end position="273"/>
    </location>
</feature>
<feature type="transmembrane region" description="Helical" evidence="1">
    <location>
        <begin position="415"/>
        <end position="437"/>
    </location>
</feature>
<feature type="transmembrane region" description="Helical" evidence="1">
    <location>
        <begin position="452"/>
        <end position="474"/>
    </location>
</feature>
<feature type="transmembrane region" description="Helical" evidence="1">
    <location>
        <begin position="516"/>
        <end position="538"/>
    </location>
</feature>
<feature type="transmembrane region" description="Helical" evidence="1">
    <location>
        <begin position="573"/>
        <end position="595"/>
    </location>
</feature>
<feature type="transmembrane region" description="Helical" evidence="1">
    <location>
        <begin position="608"/>
        <end position="630"/>
    </location>
</feature>
<feature type="transmembrane region" description="Helical" evidence="1">
    <location>
        <begin position="645"/>
        <end position="667"/>
    </location>
</feature>
<feature type="transmembrane region" description="Helical" evidence="1">
    <location>
        <begin position="684"/>
        <end position="706"/>
    </location>
</feature>
<name>EMBC_MYCSM</name>
<accession>Q50393</accession>
<proteinExistence type="inferred from homology"/>
<evidence type="ECO:0000255" key="1"/>
<evidence type="ECO:0000305" key="2"/>
<organism>
    <name type="scientific">Mycolicibacterium smegmatis</name>
    <name type="common">Mycobacterium smegmatis</name>
    <dbReference type="NCBI Taxonomy" id="1772"/>
    <lineage>
        <taxon>Bacteria</taxon>
        <taxon>Bacillati</taxon>
        <taxon>Actinomycetota</taxon>
        <taxon>Actinomycetes</taxon>
        <taxon>Mycobacteriales</taxon>
        <taxon>Mycobacteriaceae</taxon>
        <taxon>Mycolicibacterium</taxon>
    </lineage>
</organism>
<protein>
    <recommendedName>
        <fullName>Probable arabinosyltransferase C</fullName>
        <ecNumber>2.4.2.-</ecNumber>
    </recommendedName>
</protein>
<reference key="1">
    <citation type="journal article" date="1997" name="Nat. Med.">
        <title>The emb operon, a gene cluster of Mycobacterium tuberculosis involved in resistance to ethambutol.</title>
        <authorList>
            <person name="Telenti A."/>
            <person name="Philipp W.J."/>
            <person name="Sreevatsan S."/>
            <person name="Bernasconi C."/>
            <person name="Stockbauer K.E."/>
            <person name="Wieles B."/>
            <person name="Musser J.M."/>
            <person name="Jacobs W.R. Jr."/>
        </authorList>
    </citation>
    <scope>NUCLEOTIDE SEQUENCE [GENOMIC DNA]</scope>
    <source>
        <strain>imm30</strain>
    </source>
</reference>
<gene>
    <name type="primary">embC</name>
</gene>
<keyword id="KW-0046">Antibiotic resistance</keyword>
<keyword id="KW-1003">Cell membrane</keyword>
<keyword id="KW-0961">Cell wall biogenesis/degradation</keyword>
<keyword id="KW-0328">Glycosyltransferase</keyword>
<keyword id="KW-0472">Membrane</keyword>
<keyword id="KW-0808">Transferase</keyword>
<keyword id="KW-0812">Transmembrane</keyword>
<keyword id="KW-1133">Transmembrane helix</keyword>
<dbReference type="EC" id="2.4.2.-"/>
<dbReference type="EMBL" id="U46844">
    <property type="protein sequence ID" value="AAC45271.1"/>
    <property type="molecule type" value="Genomic_DNA"/>
</dbReference>
<dbReference type="PIR" id="T45094">
    <property type="entry name" value="T45094"/>
</dbReference>
<dbReference type="SMR" id="Q50393"/>
<dbReference type="CAZy" id="GT53">
    <property type="family name" value="Glycosyltransferase Family 53"/>
</dbReference>
<dbReference type="GO" id="GO:0005886">
    <property type="term" value="C:plasma membrane"/>
    <property type="evidence" value="ECO:0007669"/>
    <property type="project" value="UniProtKB-SubCell"/>
</dbReference>
<dbReference type="GO" id="GO:0052636">
    <property type="term" value="F:arabinosyltransferase activity"/>
    <property type="evidence" value="ECO:0007669"/>
    <property type="project" value="InterPro"/>
</dbReference>
<dbReference type="GO" id="GO:0071766">
    <property type="term" value="P:Actinobacterium-type cell wall biogenesis"/>
    <property type="evidence" value="ECO:0007669"/>
    <property type="project" value="InterPro"/>
</dbReference>
<dbReference type="GO" id="GO:0071555">
    <property type="term" value="P:cell wall organization"/>
    <property type="evidence" value="ECO:0007669"/>
    <property type="project" value="UniProtKB-KW"/>
</dbReference>
<dbReference type="GO" id="GO:0046677">
    <property type="term" value="P:response to antibiotic"/>
    <property type="evidence" value="ECO:0007669"/>
    <property type="project" value="UniProtKB-KW"/>
</dbReference>
<dbReference type="Gene3D" id="3.40.190.160">
    <property type="match status" value="1"/>
</dbReference>
<dbReference type="Gene3D" id="2.60.120.610">
    <property type="entry name" value="arabinofuranosyltransferase like domain"/>
    <property type="match status" value="1"/>
</dbReference>
<dbReference type="Gene3D" id="2.60.120.940">
    <property type="entry name" value="EmbC, C-terminal domain, subdomain 2"/>
    <property type="match status" value="1"/>
</dbReference>
<dbReference type="InterPro" id="IPR032731">
    <property type="entry name" value="Arabino_trans_C"/>
</dbReference>
<dbReference type="InterPro" id="IPR042486">
    <property type="entry name" value="Arabino_trans_C_2"/>
</dbReference>
<dbReference type="InterPro" id="IPR007680">
    <property type="entry name" value="Arabino_trans_central"/>
</dbReference>
<dbReference type="InterPro" id="IPR040920">
    <property type="entry name" value="Arabino_trans_N"/>
</dbReference>
<dbReference type="InterPro" id="IPR027451">
    <property type="entry name" value="EmbABC_dom1"/>
</dbReference>
<dbReference type="Pfam" id="PF14896">
    <property type="entry name" value="Arabino_trans_C"/>
    <property type="match status" value="1"/>
</dbReference>
<dbReference type="Pfam" id="PF17689">
    <property type="entry name" value="Arabino_trans_N"/>
    <property type="match status" value="1"/>
</dbReference>
<dbReference type="Pfam" id="PF04602">
    <property type="entry name" value="Arabinose_trans"/>
    <property type="match status" value="1"/>
</dbReference>
<comment type="function">
    <text>Arabinosyl transferase responsible for the polymerization of arabinose into the arabinan of arabinogalactan.</text>
</comment>
<comment type="subcellular location">
    <subcellularLocation>
        <location evidence="2">Cell membrane</location>
        <topology evidence="2">Multi-pass membrane protein</topology>
    </subcellularLocation>
</comment>
<comment type="miscellaneous">
    <text>This is one of the targets of the anti-tuberculosis drug ethambutol [(S,S')-2,2'-(ethylenediimino)di-1-butanol; EMB]. EMB is a first-line drug used to treat tuberculosis. EMB inhibits the transfer of arabinogalactan into the cell wall.</text>
</comment>
<comment type="similarity">
    <text evidence="2">Belongs to the emb family.</text>
</comment>